<organism>
    <name type="scientific">Homo sapiens</name>
    <name type="common">Human</name>
    <dbReference type="NCBI Taxonomy" id="9606"/>
    <lineage>
        <taxon>Eukaryota</taxon>
        <taxon>Metazoa</taxon>
        <taxon>Chordata</taxon>
        <taxon>Craniata</taxon>
        <taxon>Vertebrata</taxon>
        <taxon>Euteleostomi</taxon>
        <taxon>Mammalia</taxon>
        <taxon>Eutheria</taxon>
        <taxon>Euarchontoglires</taxon>
        <taxon>Primates</taxon>
        <taxon>Haplorrhini</taxon>
        <taxon>Catarrhini</taxon>
        <taxon>Hominidae</taxon>
        <taxon>Homo</taxon>
    </lineage>
</organism>
<protein>
    <recommendedName>
        <fullName evidence="18">Myotubularin-related protein 13</fullName>
    </recommendedName>
    <alternativeName>
        <fullName evidence="18">Inactive phosphatidylinositol 3-phosphatase 13</fullName>
    </alternativeName>
    <alternativeName>
        <fullName evidence="17">SET-binding factor 2</fullName>
    </alternativeName>
</protein>
<proteinExistence type="evidence at protein level"/>
<sequence length="1849" mass="208464">MARLADYFIVVGYDHEKPGSGEGLGKIIQRFPQKDWDDTPFPQGIELFCQPGGWQLSRERKQPTFFVVVLTDIDSDRHYCSCLTFYEAEINLQGTKKEEIEGEAKVSGLIQPAEVFAPKSLVLVSRLYYPEIFRACLGLIYTVYVDSLNVSLESLIANLCACLVPAAGGSQKLFSLGAGDRQLIQTPLHDSLPITGTSVALLFQQLGIQNVLSLFCAVLTENKVLFHSASFQRLSDACRALESLMFPLKYSYPYIPILPAQLLEVLSSPTPFIIGVHSVFKTDVHELLDVIIADLDGGTIKIPECIHLSSLPEPLLHQTQSALSLILHPDLEVADHAFPPPRTALSHSKMLDKEVRAVFLRLFAQLFQGYRSCLQLIRIHAEPVIHFHKTAFLGQRGLVENDFLTKVLSGMAFAGFVSERGPPYRSCDLFDELVAFEVERIKVEENNPVKMIKHVRELAEQLFKNENPNPHMAFQKVPRPTEGSHLRVHILPFPEINEARVQELIQENVAKNQNAPPATRIEKKCVVPAGPPVVSIMDKVTTVFNSAQRLEVVRNCISFIFENKILETEKTLPAALRALKGKAARQCLTDELGLHVQQNRAILDHQQFDYIIRMMNCTLQDCSSLEEYNIAAALLPLTSAFYRKLAPGVSQFAYTCVQDHPIWTNQQFWETTFYNAVQEQVRSLYLSAKEDNHAPHLKQKDKLPDDHYQEKTAMDLAAEQLRLWPTLSKSTQQELVQHEESTVFSQAIHFANLMVNLLVPLDTSKNKLLRTSAPGDWESGSNSIVTNSIAGSVAESYDTESGFEDSENTDIANSVVRFITRFIDKVCTESGVTQDHIKSLHCMIPGIVAMHIETLEAVHRESRRLPPIQKPKILRPALLPGEEIVCEGLRVLLDPDGREEATGGLLGGPQLLPAEGALFLTTYRILFRGTPHDQLVGEQTVVRSFPIASITKEKKITMQNQLQQNMQEGLQITSASFQLIKVAFDEEVSPEVVEIFKKQLMKFRYPQSIFSTFAFAAGQTTPQIILPKQKEKNTSFRTFSKTIVKGAKRAGKMTIGRQYLLKKKTGTIVEERVNRPGWNEDDDVSVSDESELPTSTTLKASEKSTMEQLVEKACFRDYQRLGLGTISGSSSRSRPEYFRITASNRMYSLCRSYPGLLVVPQAVQDSSLPRVARCYRHNRLPVVCWKNSRSGTLLLRSGGFHGKGVVGLFKSQNSPQAAPTSSLESSSSIEQEKYLQALLNAVSVHQKLRGNSTLTVRPAFALSPGVWASLRSSTRLISSPTSFIDVGARLAGKDHSASFSNSSYLQNQLLKRQAALYIFGEKSQLRNFKVEFALNCEFVPVEFHEIRQVKASFKKLMRACIPSTIPTDSEVTFLKALGDSEWFPQLHRIMQLAVVVSEVLENGSSVLVCLEEGWDITAQVTSLVQLLSDPFYRTLEGFQMLVEKEWLSFGHKFSQRSSLTLNCQGSGFAPVFLQFLDCVHQVHNQYPTEFEFNLYYLKFLAFHYVSNRFKTFLLDSDYERLEHGTLFDDKGEKHAKKGVCIWECIDRMHKRSPIFFNYLYSPLEIEALKPNVNVSSLKKWDYYIEETLSTGPSYDWMMLTPKHFPSEDSDLAGEAGPRSQRRTVWPCYDDVSCTQPDALTSLFSEIEKLEHKLNQAPEKWQQLWERVTVDLKEEPRTDRSQRHLSRSPGIVSTNLPSYQKRSLLHLPDSSMGEEQNSSISPSNGVERRAATLYSQYTSKNDENRSFEGTLYKRGALLKGWKPRWFVLDVTKHQLRYYDSGEDTSCKGHIDLAEVEMVIPAGPSMGAPKHTSDKAFFDLKTSKRVYNFCAQDGQSAQQWMDKIQSCISDA</sequence>
<feature type="chain" id="PRO_0000094945" description="Myotubularin-related protein 13">
    <location>
        <begin position="1"/>
        <end position="1849"/>
    </location>
</feature>
<feature type="domain" description="uDENN" evidence="4">
    <location>
        <begin position="7"/>
        <end position="172"/>
    </location>
</feature>
<feature type="domain" description="cDENN" evidence="4">
    <location>
        <begin position="191"/>
        <end position="324"/>
    </location>
</feature>
<feature type="domain" description="dDENN" evidence="4">
    <location>
        <begin position="326"/>
        <end position="427"/>
    </location>
</feature>
<feature type="domain" description="GRAM" evidence="2">
    <location>
        <begin position="871"/>
        <end position="957"/>
    </location>
</feature>
<feature type="domain" description="Myotubularin phosphatase" evidence="5">
    <location>
        <begin position="1108"/>
        <end position="1584"/>
    </location>
</feature>
<feature type="domain" description="PH" evidence="3">
    <location>
        <begin position="1743"/>
        <end position="1847"/>
    </location>
</feature>
<feature type="region of interest" description="Required for homodimerization and interaction with MTMR2" evidence="1 12">
    <location>
        <begin position="1629"/>
        <end position="1682"/>
    </location>
</feature>
<feature type="region of interest" description="Disordered" evidence="6">
    <location>
        <begin position="1674"/>
        <end position="1694"/>
    </location>
</feature>
<feature type="modified residue" description="Phosphoserine" evidence="19">
    <location>
        <position position="1127"/>
    </location>
</feature>
<feature type="modified residue" description="Phosphoserine" evidence="20">
    <location>
        <position position="1279"/>
    </location>
</feature>
<feature type="splice variant" id="VSP_017157" description="In isoform 3." evidence="16">
    <original>S</original>
    <variation>R</variation>
    <location>
        <position position="1152"/>
    </location>
</feature>
<feature type="splice variant" id="VSP_017158" description="In isoform 3." evidence="16">
    <location>
        <begin position="1153"/>
        <end position="1849"/>
    </location>
</feature>
<feature type="sequence variant" id="VAR_051766" description="In dbSNP:rs16907355.">
    <original>P</original>
    <variation>L</variation>
    <location>
        <position position="303"/>
    </location>
</feature>
<feature type="sequence variant" id="VAR_051767" description="In dbSNP:rs7102464.">
    <original>E</original>
    <variation>K</variation>
    <location>
        <position position="679"/>
    </location>
</feature>
<feature type="sequence variant" id="VAR_051768" description="In dbSNP:rs12574508." evidence="11">
    <original>Q</original>
    <variation>E</variation>
    <location>
        <position position="1216"/>
    </location>
</feature>
<feature type="sequence conflict" description="In Ref. 4; CAH18167." evidence="18" ref="4">
    <original>E</original>
    <variation>G</variation>
    <location>
        <position position="1586"/>
    </location>
</feature>
<feature type="sequence conflict" description="In Ref. 4; CAH18167." evidence="18" ref="4">
    <original>E</original>
    <variation>V</variation>
    <location>
        <position position="1665"/>
    </location>
</feature>
<accession>Q86WG5</accession>
<accession>Q3MJF0</accession>
<accession>Q68DQ3</accession>
<accession>Q6P459</accession>
<accession>Q6PJD1</accession>
<accession>Q7Z325</accession>
<accession>Q7Z621</accession>
<accession>Q86VE2</accession>
<accession>Q96FE2</accession>
<accession>Q9C097</accession>
<gene>
    <name type="primary">SBF2</name>
    <name type="synonym">CMT4B2</name>
    <name type="synonym">KIAA1766</name>
    <name type="synonym">MTMR13</name>
</gene>
<comment type="function">
    <text evidence="1 13 14">Guanine nucleotide exchange factor (GEF) which activates RAB21 and possibly RAB28 (PubMed:20937701, PubMed:25648148). Promotes the exchange of GDP to GTP, converting inactive GDP-bound Rab proteins into their active GTP-bound form (PubMed:20937701, PubMed:25648148). In response to starvation-induced autophagy, activates RAB21 which in turn binds to and regulates SNARE protein VAMP8 endolysosomal transport required for SNARE-mediated autophagosome-lysosome fusion (PubMed:25648148). Acts as an adapter for the phosphatase MTMR2 (By similarity). Increases MTMR2 catalytic activity towards phosphatidylinositol 3,5-bisphosphate and to a lesser extent towards phosphatidylinositol 3-phosphate (By similarity).</text>
</comment>
<comment type="subunit">
    <text evidence="1 12 14 15">Homodimer (By similarity). Heterotetramer consisting of one MTMR2 dimer and one SBF2/MTMR13 dimer; stabilizes SBF2/MTMR13 at the membranes and increases MTMR2 catalytic activity towards phosphatidylinositol 3,5-bisphosphate and to a lesser extent towards phosphatidylinositol 3-phosphate (PubMed:15998640, PubMed:34718573). Interacts with SBF1/MTMR5; the interaction seems to be independent of the coiled-coil and PH domain of SBF2/MTMR13 and independent of MTMR2 (PubMed:34718573). Interacts with class II PI3-kinase PIK3C2A (By similarity). Interacts (via DENN domain) with RAB21 (in GDP-bound form) in response to starvation; the interaction activates RAB21 (PubMed:25648148). Interacts with VAMP8 in response to starvation (PubMed:25648148).</text>
</comment>
<comment type="interaction">
    <interactant intactId="EBI-2683289">
        <id>Q86WG5</id>
    </interactant>
    <interactant intactId="EBI-741101">
        <id>Q13643</id>
        <label>FHL3</label>
    </interactant>
    <organismsDiffer>false</organismsDiffer>
    <experiments>3</experiments>
</comment>
<comment type="interaction">
    <interactant intactId="EBI-2683289">
        <id>Q86WG5</id>
    </interactant>
    <interactant intactId="EBI-740322">
        <id>Q93062</id>
        <label>RBPMS</label>
    </interactant>
    <organismsDiffer>false</organismsDiffer>
    <experiments>3</experiments>
</comment>
<comment type="subcellular location">
    <subcellularLocation>
        <location evidence="12">Cytoplasm</location>
    </subcellularLocation>
    <subcellularLocation>
        <location evidence="1">Cytoplasm</location>
        <location evidence="1">Perinuclear region</location>
    </subcellularLocation>
    <subcellularLocation>
        <location evidence="12">Membrane</location>
        <topology evidence="12">Peripheral membrane protein</topology>
    </subcellularLocation>
    <subcellularLocation>
        <location evidence="1">Endosome membrane</location>
        <topology evidence="18">Peripheral membrane protein</topology>
    </subcellularLocation>
    <subcellularLocation>
        <location evidence="1">Cell projection</location>
        <location evidence="1">Axon</location>
    </subcellularLocation>
    <text evidence="1 12">Associated with membranes (PubMed:15998640). Localizes to vacuoles in hypo-osmotic conditions (By similarity). Membrane localization is likely to be mediated via its interaction with MTMR2 (By similarity).</text>
</comment>
<comment type="alternative products">
    <event type="alternative splicing"/>
    <isoform>
        <id>Q86WG5-1</id>
        <name>1</name>
        <sequence type="displayed"/>
    </isoform>
    <isoform>
        <id>Q86WG5-3</id>
        <name>3</name>
        <sequence type="described" ref="VSP_017157 VSP_017158"/>
    </isoform>
</comment>
<comment type="tissue specificity">
    <text evidence="7">Widely expressed. Expressed in spinal cord.</text>
</comment>
<comment type="domain">
    <text evidence="1">The C-terminal domain mediates homodimerization (By similarity). By mediating SBF2/MTMR13 homodimerization, indirectly involved in SBF2/MTMR13 and MTMR2 heterotetramerization (By similarity).</text>
</comment>
<comment type="domain">
    <text evidence="1">The GRAM domain mediates binding to phosphatidylinositol 4-phosphate, phosphatidylinositol 5-phosphate, phosphatidylinositol 3,5-biphosphate and phosphatidylinositol 3,4,5-trisphosphate.</text>
</comment>
<comment type="domain">
    <text evidence="1">The PH domain binds preferentially phosphatidylinositol 3,4,5-trisphosphate (By similarity). Appears to be dispensable for localization to membranes (By similarity).</text>
</comment>
<comment type="disease" evidence="7 8 9 10">
    <disease id="DI-00287">
        <name>Charcot-Marie-Tooth disease, demyelinating, type 4B2</name>
        <acronym>CMT4B2</acronym>
        <description>A recessive demyelinating form of Charcot-Marie-Tooth disease, a disorder of the peripheral nervous system, characterized by progressive weakness and atrophy, initially of the peroneal muscles and later of the distal muscles of the arms. Charcot-Marie-Tooth disease is classified in two main groups on the basis of electrophysiologic properties and histopathology: primary peripheral demyelinating neuropathies (designated CMT1 when they are dominantly inherited) and primary peripheral axonal neuropathies (CMT2). Demyelinating neuropathies are characterized by severely reduced nerve conduction velocities (less than 38 m/sec), segmental demyelination and remyelination with onion bulb formations on nerve biopsy, slowly progressive distal muscle atrophy and weakness, absent deep tendon reflexes, and hollow feet. By convention autosomal recessive forms of demyelinating Charcot-Marie-Tooth disease are designated CMT4.</description>
        <dbReference type="MIM" id="604563"/>
    </disease>
    <text>The disease is caused by variants affecting the gene represented in this entry.</text>
</comment>
<comment type="similarity">
    <text evidence="18">Belongs to the protein-tyrosine phosphatase family. Non-receptor class myotubularin subfamily.</text>
</comment>
<comment type="caution">
    <text evidence="18">Although it belongs to the non-receptor class myotubularin subfamily, lacks the conserved active site cysteine residue at position 1410 in the dsPTPase catalytic loop, suggesting that it has no phosphatase activity.</text>
</comment>
<comment type="online information" name="Inherited peripheral neuropathies mutation db">
    <link uri="https://uantwerpen.vib.be/CMTMutations"/>
</comment>
<evidence type="ECO:0000250" key="1">
    <source>
        <dbReference type="UniProtKB" id="E9PXF8"/>
    </source>
</evidence>
<evidence type="ECO:0000255" key="2"/>
<evidence type="ECO:0000255" key="3">
    <source>
        <dbReference type="PROSITE-ProRule" id="PRU00145"/>
    </source>
</evidence>
<evidence type="ECO:0000255" key="4">
    <source>
        <dbReference type="PROSITE-ProRule" id="PRU00304"/>
    </source>
</evidence>
<evidence type="ECO:0000255" key="5">
    <source>
        <dbReference type="PROSITE-ProRule" id="PRU00669"/>
    </source>
</evidence>
<evidence type="ECO:0000256" key="6">
    <source>
        <dbReference type="SAM" id="MobiDB-lite"/>
    </source>
</evidence>
<evidence type="ECO:0000269" key="7">
    <source>
    </source>
</evidence>
<evidence type="ECO:0000269" key="8">
    <source>
    </source>
</evidence>
<evidence type="ECO:0000269" key="9">
    <source>
    </source>
</evidence>
<evidence type="ECO:0000269" key="10">
    <source>
    </source>
</evidence>
<evidence type="ECO:0000269" key="11">
    <source>
    </source>
</evidence>
<evidence type="ECO:0000269" key="12">
    <source>
    </source>
</evidence>
<evidence type="ECO:0000269" key="13">
    <source>
    </source>
</evidence>
<evidence type="ECO:0000269" key="14">
    <source>
    </source>
</evidence>
<evidence type="ECO:0000269" key="15">
    <source>
    </source>
</evidence>
<evidence type="ECO:0000303" key="16">
    <source>
    </source>
</evidence>
<evidence type="ECO:0000303" key="17">
    <source>
    </source>
</evidence>
<evidence type="ECO:0000305" key="18"/>
<evidence type="ECO:0007744" key="19">
    <source>
    </source>
</evidence>
<evidence type="ECO:0007744" key="20">
    <source>
    </source>
</evidence>
<keyword id="KW-0025">Alternative splicing</keyword>
<keyword id="KW-0072">Autophagy</keyword>
<keyword id="KW-0966">Cell projection</keyword>
<keyword id="KW-0144">Charcot-Marie-Tooth disease</keyword>
<keyword id="KW-0963">Cytoplasm</keyword>
<keyword id="KW-0967">Endosome</keyword>
<keyword id="KW-0344">Guanine-nucleotide releasing factor</keyword>
<keyword id="KW-0472">Membrane</keyword>
<keyword id="KW-0523">Neurodegeneration</keyword>
<keyword id="KW-0622">Neuropathy</keyword>
<keyword id="KW-0597">Phosphoprotein</keyword>
<keyword id="KW-1267">Proteomics identification</keyword>
<keyword id="KW-1185">Reference proteome</keyword>
<dbReference type="EMBL" id="AY234241">
    <property type="protein sequence ID" value="AAO62733.1"/>
    <property type="molecule type" value="mRNA"/>
</dbReference>
<dbReference type="EMBL" id="BC011143">
    <property type="protein sequence ID" value="AAH11143.1"/>
    <property type="molecule type" value="mRNA"/>
</dbReference>
<dbReference type="EMBL" id="BC043389">
    <property type="protein sequence ID" value="AAH43389.1"/>
    <property type="molecule type" value="mRNA"/>
</dbReference>
<dbReference type="EMBL" id="BC053867">
    <property type="protein sequence ID" value="AAH53867.1"/>
    <property type="molecule type" value="mRNA"/>
</dbReference>
<dbReference type="EMBL" id="BC063656">
    <property type="protein sequence ID" value="AAH63656.1"/>
    <property type="molecule type" value="mRNA"/>
</dbReference>
<dbReference type="EMBL" id="BC101466">
    <property type="protein sequence ID" value="AAI01467.1"/>
    <property type="molecule type" value="mRNA"/>
</dbReference>
<dbReference type="EMBL" id="AB051553">
    <property type="protein sequence ID" value="BAB21857.1"/>
    <property type="molecule type" value="mRNA"/>
</dbReference>
<dbReference type="EMBL" id="BX538184">
    <property type="protein sequence ID" value="CAD98056.1"/>
    <property type="molecule type" value="mRNA"/>
</dbReference>
<dbReference type="EMBL" id="CR749312">
    <property type="protein sequence ID" value="CAH18167.1"/>
    <property type="molecule type" value="mRNA"/>
</dbReference>
<dbReference type="CCDS" id="CCDS31427.1">
    <molecule id="Q86WG5-1"/>
</dbReference>
<dbReference type="RefSeq" id="NP_112224.1">
    <molecule id="Q86WG5-1"/>
    <property type="nucleotide sequence ID" value="NM_030962.4"/>
</dbReference>
<dbReference type="SMR" id="Q86WG5"/>
<dbReference type="BioGRID" id="123597">
    <property type="interactions" value="51"/>
</dbReference>
<dbReference type="FunCoup" id="Q86WG5">
    <property type="interactions" value="2716"/>
</dbReference>
<dbReference type="IntAct" id="Q86WG5">
    <property type="interactions" value="28"/>
</dbReference>
<dbReference type="MINT" id="Q86WG5"/>
<dbReference type="STRING" id="9606.ENSP00000256190"/>
<dbReference type="DEPOD" id="SBF2"/>
<dbReference type="GlyGen" id="Q86WG5">
    <property type="glycosylation" value="1 site"/>
</dbReference>
<dbReference type="iPTMnet" id="Q86WG5"/>
<dbReference type="PhosphoSitePlus" id="Q86WG5"/>
<dbReference type="BioMuta" id="SBF2"/>
<dbReference type="DMDM" id="74750502"/>
<dbReference type="jPOST" id="Q86WG5"/>
<dbReference type="MassIVE" id="Q86WG5"/>
<dbReference type="PaxDb" id="9606-ENSP00000256190"/>
<dbReference type="PeptideAtlas" id="Q86WG5"/>
<dbReference type="ProteomicsDB" id="70158">
    <molecule id="Q86WG5-1"/>
</dbReference>
<dbReference type="ProteomicsDB" id="70159">
    <molecule id="Q86WG5-3"/>
</dbReference>
<dbReference type="Pumba" id="Q86WG5"/>
<dbReference type="Antibodypedia" id="24321">
    <property type="antibodies" value="34 antibodies from 10 providers"/>
</dbReference>
<dbReference type="DNASU" id="81846"/>
<dbReference type="Ensembl" id="ENST00000256190.13">
    <molecule id="Q86WG5-1"/>
    <property type="protein sequence ID" value="ENSP00000256190.8"/>
    <property type="gene ID" value="ENSG00000133812.18"/>
</dbReference>
<dbReference type="Ensembl" id="ENST00000533770.6">
    <molecule id="Q86WG5-3"/>
    <property type="protein sequence ID" value="ENSP00000509247.1"/>
    <property type="gene ID" value="ENSG00000133812.18"/>
</dbReference>
<dbReference type="GeneID" id="81846"/>
<dbReference type="KEGG" id="hsa:81846"/>
<dbReference type="MANE-Select" id="ENST00000256190.13">
    <property type="protein sequence ID" value="ENSP00000256190.8"/>
    <property type="RefSeq nucleotide sequence ID" value="NM_030962.4"/>
    <property type="RefSeq protein sequence ID" value="NP_112224.1"/>
</dbReference>
<dbReference type="UCSC" id="uc001mib.2">
    <molecule id="Q86WG5-1"/>
    <property type="organism name" value="human"/>
</dbReference>
<dbReference type="AGR" id="HGNC:2135"/>
<dbReference type="CTD" id="81846"/>
<dbReference type="DisGeNET" id="81846"/>
<dbReference type="GeneCards" id="SBF2"/>
<dbReference type="GeneReviews" id="SBF2"/>
<dbReference type="HGNC" id="HGNC:2135">
    <property type="gene designation" value="SBF2"/>
</dbReference>
<dbReference type="HPA" id="ENSG00000133812">
    <property type="expression patterns" value="Low tissue specificity"/>
</dbReference>
<dbReference type="MalaCards" id="SBF2"/>
<dbReference type="MIM" id="604563">
    <property type="type" value="phenotype"/>
</dbReference>
<dbReference type="MIM" id="607697">
    <property type="type" value="gene"/>
</dbReference>
<dbReference type="neXtProt" id="NX_Q86WG5"/>
<dbReference type="OpenTargets" id="ENSG00000133812"/>
<dbReference type="Orphanet" id="99956">
    <property type="disease" value="Charcot-Marie-Tooth disease type 4B2"/>
</dbReference>
<dbReference type="PharmGKB" id="PA26649"/>
<dbReference type="VEuPathDB" id="HostDB:ENSG00000133812"/>
<dbReference type="eggNOG" id="KOG1090">
    <property type="taxonomic scope" value="Eukaryota"/>
</dbReference>
<dbReference type="eggNOG" id="KOG4471">
    <property type="taxonomic scope" value="Eukaryota"/>
</dbReference>
<dbReference type="GeneTree" id="ENSGT00940000155385"/>
<dbReference type="HOGENOM" id="CLU_002298_1_1_1"/>
<dbReference type="InParanoid" id="Q86WG5"/>
<dbReference type="OrthoDB" id="74314at2759"/>
<dbReference type="PAN-GO" id="Q86WG5">
    <property type="GO annotations" value="2 GO annotations based on evolutionary models"/>
</dbReference>
<dbReference type="PhylomeDB" id="Q86WG5"/>
<dbReference type="TreeFam" id="TF318583"/>
<dbReference type="PathwayCommons" id="Q86WG5"/>
<dbReference type="Reactome" id="R-HSA-1660499">
    <property type="pathway name" value="Synthesis of PIPs at the plasma membrane"/>
</dbReference>
<dbReference type="Reactome" id="R-HSA-8876198">
    <property type="pathway name" value="RAB GEFs exchange GTP for GDP on RABs"/>
</dbReference>
<dbReference type="SignaLink" id="Q86WG5"/>
<dbReference type="BioGRID-ORCS" id="81846">
    <property type="hits" value="12 hits in 1169 CRISPR screens"/>
</dbReference>
<dbReference type="CD-CODE" id="FB4E32DD">
    <property type="entry name" value="Presynaptic clusters and postsynaptic densities"/>
</dbReference>
<dbReference type="ChiTaRS" id="SBF2">
    <property type="organism name" value="human"/>
</dbReference>
<dbReference type="GeneWiki" id="SBF2"/>
<dbReference type="GenomeRNAi" id="81846"/>
<dbReference type="Pharos" id="Q86WG5">
    <property type="development level" value="Tbio"/>
</dbReference>
<dbReference type="PRO" id="PR:Q86WG5"/>
<dbReference type="Proteomes" id="UP000005640">
    <property type="component" value="Chromosome 11"/>
</dbReference>
<dbReference type="RNAct" id="Q86WG5">
    <property type="molecule type" value="protein"/>
</dbReference>
<dbReference type="Bgee" id="ENSG00000133812">
    <property type="expression patterns" value="Expressed in epithelial cell of pancreas and 188 other cell types or tissues"/>
</dbReference>
<dbReference type="ExpressionAtlas" id="Q86WG5">
    <property type="expression patterns" value="baseline and differential"/>
</dbReference>
<dbReference type="GO" id="GO:0030424">
    <property type="term" value="C:axon"/>
    <property type="evidence" value="ECO:0007669"/>
    <property type="project" value="UniProtKB-SubCell"/>
</dbReference>
<dbReference type="GO" id="GO:0005737">
    <property type="term" value="C:cytoplasm"/>
    <property type="evidence" value="ECO:0000318"/>
    <property type="project" value="GO_Central"/>
</dbReference>
<dbReference type="GO" id="GO:0005829">
    <property type="term" value="C:cytosol"/>
    <property type="evidence" value="ECO:0000304"/>
    <property type="project" value="Reactome"/>
</dbReference>
<dbReference type="GO" id="GO:0010008">
    <property type="term" value="C:endosome membrane"/>
    <property type="evidence" value="ECO:0007669"/>
    <property type="project" value="UniProtKB-SubCell"/>
</dbReference>
<dbReference type="GO" id="GO:0016020">
    <property type="term" value="C:membrane"/>
    <property type="evidence" value="ECO:0000314"/>
    <property type="project" value="UniProtKB"/>
</dbReference>
<dbReference type="GO" id="GO:0048471">
    <property type="term" value="C:perinuclear region of cytoplasm"/>
    <property type="evidence" value="ECO:0007669"/>
    <property type="project" value="UniProtKB-SubCell"/>
</dbReference>
<dbReference type="GO" id="GO:0005774">
    <property type="term" value="C:vacuolar membrane"/>
    <property type="evidence" value="ECO:0007669"/>
    <property type="project" value="Ensembl"/>
</dbReference>
<dbReference type="GO" id="GO:0005085">
    <property type="term" value="F:guanyl-nucleotide exchange factor activity"/>
    <property type="evidence" value="ECO:0000314"/>
    <property type="project" value="UniProtKB"/>
</dbReference>
<dbReference type="GO" id="GO:0042802">
    <property type="term" value="F:identical protein binding"/>
    <property type="evidence" value="ECO:0007669"/>
    <property type="project" value="Ensembl"/>
</dbReference>
<dbReference type="GO" id="GO:0019902">
    <property type="term" value="F:phosphatase binding"/>
    <property type="evidence" value="ECO:0007669"/>
    <property type="project" value="Ensembl"/>
</dbReference>
<dbReference type="GO" id="GO:0019208">
    <property type="term" value="F:phosphatase regulator activity"/>
    <property type="evidence" value="ECO:0007669"/>
    <property type="project" value="Ensembl"/>
</dbReference>
<dbReference type="GO" id="GO:0035091">
    <property type="term" value="F:phosphatidylinositol binding"/>
    <property type="evidence" value="ECO:0007669"/>
    <property type="project" value="Ensembl"/>
</dbReference>
<dbReference type="GO" id="GO:0006914">
    <property type="term" value="P:autophagy"/>
    <property type="evidence" value="ECO:0007669"/>
    <property type="project" value="UniProtKB-KW"/>
</dbReference>
<dbReference type="GO" id="GO:0042552">
    <property type="term" value="P:myelination"/>
    <property type="evidence" value="ECO:0000303"/>
    <property type="project" value="UniProtKB"/>
</dbReference>
<dbReference type="CDD" id="cd13339">
    <property type="entry name" value="PH-GRAM_MTMR13"/>
    <property type="match status" value="1"/>
</dbReference>
<dbReference type="CDD" id="cd01235">
    <property type="entry name" value="PH_Sbf1_hMTMR5"/>
    <property type="match status" value="1"/>
</dbReference>
<dbReference type="CDD" id="cd14589">
    <property type="entry name" value="PTP-MTMR13"/>
    <property type="match status" value="1"/>
</dbReference>
<dbReference type="FunFam" id="2.30.29.30:FF:000093">
    <property type="entry name" value="SET binding factor 2"/>
    <property type="match status" value="1"/>
</dbReference>
<dbReference type="FunFam" id="3.30.450.200:FF:000004">
    <property type="entry name" value="SET binding factor 2"/>
    <property type="match status" value="1"/>
</dbReference>
<dbReference type="FunFam" id="3.40.50.11500:FF:000006">
    <property type="entry name" value="SET binding factor 2"/>
    <property type="match status" value="1"/>
</dbReference>
<dbReference type="Gene3D" id="3.30.450.200">
    <property type="match status" value="1"/>
</dbReference>
<dbReference type="Gene3D" id="3.40.50.11500">
    <property type="match status" value="1"/>
</dbReference>
<dbReference type="Gene3D" id="2.30.29.30">
    <property type="entry name" value="Pleckstrin-homology domain (PH domain)/Phosphotyrosine-binding domain (PTB)"/>
    <property type="match status" value="2"/>
</dbReference>
<dbReference type="InterPro" id="IPR001194">
    <property type="entry name" value="cDENN_dom"/>
</dbReference>
<dbReference type="InterPro" id="IPR005112">
    <property type="entry name" value="dDENN_dom"/>
</dbReference>
<dbReference type="InterPro" id="IPR043153">
    <property type="entry name" value="DENN_C"/>
</dbReference>
<dbReference type="InterPro" id="IPR004182">
    <property type="entry name" value="GRAM"/>
</dbReference>
<dbReference type="InterPro" id="IPR037823">
    <property type="entry name" value="MTMR13_PH-GRAM"/>
</dbReference>
<dbReference type="InterPro" id="IPR030564">
    <property type="entry name" value="Myotubularin"/>
</dbReference>
<dbReference type="InterPro" id="IPR010569">
    <property type="entry name" value="Myotubularin-like_Pase_dom"/>
</dbReference>
<dbReference type="InterPro" id="IPR011993">
    <property type="entry name" value="PH-like_dom_sf"/>
</dbReference>
<dbReference type="InterPro" id="IPR001849">
    <property type="entry name" value="PH_domain"/>
</dbReference>
<dbReference type="InterPro" id="IPR029021">
    <property type="entry name" value="Prot-tyrosine_phosphatase-like"/>
</dbReference>
<dbReference type="InterPro" id="IPR022096">
    <property type="entry name" value="SBF1/SBF2"/>
</dbReference>
<dbReference type="InterPro" id="IPR037516">
    <property type="entry name" value="Tripartite_DENN"/>
</dbReference>
<dbReference type="InterPro" id="IPR005113">
    <property type="entry name" value="uDENN_dom"/>
</dbReference>
<dbReference type="PANTHER" id="PTHR10807">
    <property type="entry name" value="MYOTUBULARIN-RELATED"/>
    <property type="match status" value="1"/>
</dbReference>
<dbReference type="PANTHER" id="PTHR10807:SF4">
    <property type="entry name" value="MYOTUBULARIN-RELATED PROTEIN 13"/>
    <property type="match status" value="1"/>
</dbReference>
<dbReference type="Pfam" id="PF02141">
    <property type="entry name" value="DENN"/>
    <property type="match status" value="1"/>
</dbReference>
<dbReference type="Pfam" id="PF02893">
    <property type="entry name" value="GRAM"/>
    <property type="match status" value="1"/>
</dbReference>
<dbReference type="Pfam" id="PF06602">
    <property type="entry name" value="Myotub-related"/>
    <property type="match status" value="1"/>
</dbReference>
<dbReference type="Pfam" id="PF00169">
    <property type="entry name" value="PH"/>
    <property type="match status" value="1"/>
</dbReference>
<dbReference type="Pfam" id="PF12335">
    <property type="entry name" value="SBF2"/>
    <property type="match status" value="1"/>
</dbReference>
<dbReference type="Pfam" id="PF03456">
    <property type="entry name" value="uDENN"/>
    <property type="match status" value="1"/>
</dbReference>
<dbReference type="SMART" id="SM00801">
    <property type="entry name" value="dDENN"/>
    <property type="match status" value="1"/>
</dbReference>
<dbReference type="SMART" id="SM00799">
    <property type="entry name" value="DENN"/>
    <property type="match status" value="1"/>
</dbReference>
<dbReference type="SMART" id="SM00568">
    <property type="entry name" value="GRAM"/>
    <property type="match status" value="1"/>
</dbReference>
<dbReference type="SMART" id="SM00233">
    <property type="entry name" value="PH"/>
    <property type="match status" value="1"/>
</dbReference>
<dbReference type="SMART" id="SM00800">
    <property type="entry name" value="uDENN"/>
    <property type="match status" value="1"/>
</dbReference>
<dbReference type="SUPFAM" id="SSF52799">
    <property type="entry name" value="(Phosphotyrosine protein) phosphatases II"/>
    <property type="match status" value="1"/>
</dbReference>
<dbReference type="SUPFAM" id="SSF50729">
    <property type="entry name" value="PH domain-like"/>
    <property type="match status" value="2"/>
</dbReference>
<dbReference type="PROSITE" id="PS50211">
    <property type="entry name" value="DENN"/>
    <property type="match status" value="1"/>
</dbReference>
<dbReference type="PROSITE" id="PS50003">
    <property type="entry name" value="PH_DOMAIN"/>
    <property type="match status" value="1"/>
</dbReference>
<dbReference type="PROSITE" id="PS51339">
    <property type="entry name" value="PPASE_MYOTUBULARIN"/>
    <property type="match status" value="1"/>
</dbReference>
<reference key="1">
    <citation type="journal article" date="2003" name="Hum. Mol. Genet.">
        <title>Mutation of the SBF2 gene, encoding a novel member of the myotubularin family, in Charcot-Marie-Tooth neuropathy type 4B2/11p15.</title>
        <authorList>
            <person name="Senderek J."/>
            <person name="Bergmann C."/>
            <person name="Weber S."/>
            <person name="Ketelsen U.-P."/>
            <person name="Schorle H."/>
            <person name="Rudnik-Schoeneborn S."/>
            <person name="Buettner R."/>
            <person name="Buchheim E."/>
            <person name="Zerres K."/>
        </authorList>
    </citation>
    <scope>NUCLEOTIDE SEQUENCE [MRNA] (ISOFORM 1)</scope>
    <scope>INVOLVEMENT IN CMT4B2</scope>
    <scope>TISSUE SPECIFICITY</scope>
    <source>
        <tissue>Sciatic nerve</tissue>
    </source>
</reference>
<reference key="2">
    <citation type="journal article" date="2004" name="Genome Res.">
        <title>The status, quality, and expansion of the NIH full-length cDNA project: the Mammalian Gene Collection (MGC).</title>
        <authorList>
            <consortium name="The MGC Project Team"/>
        </authorList>
    </citation>
    <scope>NUCLEOTIDE SEQUENCE [LARGE SCALE MRNA] (ISOFORM 1)</scope>
    <scope>VARIANT GLU-1216</scope>
    <source>
        <tissue>Brain</tissue>
        <tissue>Cervix</tissue>
        <tissue>Duodenum</tissue>
        <tissue>Placenta</tissue>
    </source>
</reference>
<reference key="3">
    <citation type="journal article" date="2000" name="DNA Res.">
        <title>Prediction of the coding sequences of unidentified human genes. XIX. The complete sequences of 100 new cDNA clones from brain which code for large proteins in vitro.</title>
        <authorList>
            <person name="Nagase T."/>
            <person name="Kikuno R."/>
            <person name="Hattori A."/>
            <person name="Kondo Y."/>
            <person name="Okumura K."/>
            <person name="Ohara O."/>
        </authorList>
    </citation>
    <scope>NUCLEOTIDE SEQUENCE [LARGE SCALE MRNA] OF 30-1152 (ISOFORM 3)</scope>
</reference>
<reference key="4">
    <citation type="journal article" date="2007" name="BMC Genomics">
        <title>The full-ORF clone resource of the German cDNA consortium.</title>
        <authorList>
            <person name="Bechtel S."/>
            <person name="Rosenfelder H."/>
            <person name="Duda A."/>
            <person name="Schmidt C.P."/>
            <person name="Ernst U."/>
            <person name="Wellenreuther R."/>
            <person name="Mehrle A."/>
            <person name="Schuster C."/>
            <person name="Bahr A."/>
            <person name="Bloecker H."/>
            <person name="Heubner D."/>
            <person name="Hoerlein A."/>
            <person name="Michel G."/>
            <person name="Wedler H."/>
            <person name="Koehrer K."/>
            <person name="Ottenwaelder B."/>
            <person name="Poustka A."/>
            <person name="Wiemann S."/>
            <person name="Schupp I."/>
        </authorList>
    </citation>
    <scope>NUCLEOTIDE SEQUENCE [LARGE SCALE MRNA] OF 1187-1849 (ISOFORM 1)</scope>
    <source>
        <tissue>Fetal brain</tissue>
        <tissue>Liver</tissue>
    </source>
</reference>
<reference key="5">
    <citation type="journal article" date="2003" name="Am. J. Hum. Genet.">
        <title>Mutations in MTMR13, a new pseudophosphatase homologue of MTMR2 and Sbf1, in two families with an autosomal recessive demyelinating form of Charcot-Marie-Tooth disease associated with early-onset glaucoma.</title>
        <authorList>
            <person name="Azzedine H."/>
            <person name="Bolino A."/>
            <person name="Taieb T."/>
            <person name="Birouk N."/>
            <person name="Di Duca M."/>
            <person name="Bouhouche A."/>
            <person name="Benamou S."/>
            <person name="Mrabet A."/>
            <person name="Hammadouche T."/>
            <person name="Chkili T."/>
            <person name="Gouider R."/>
            <person name="Ravazzolo R."/>
            <person name="Brice A."/>
            <person name="Laporte J."/>
            <person name="LeGuern E."/>
        </authorList>
    </citation>
    <scope>INVOLVEMENT IN CMT4B2</scope>
</reference>
<reference key="6">
    <citation type="journal article" date="2004" name="Neurology">
        <title>SET binding factor 2 (SBF2) mutation causes CMT4B with juvenile onset glaucoma.</title>
        <authorList>
            <person name="Hirano R."/>
            <person name="Takashima H."/>
            <person name="Umehara F."/>
            <person name="Arimura H."/>
            <person name="Michizono K."/>
            <person name="Okamoto Y."/>
            <person name="Nakagawa M."/>
            <person name="Boerkoel C.F."/>
            <person name="Lupski J.R."/>
            <person name="Osame M."/>
            <person name="Arimura K."/>
        </authorList>
    </citation>
    <scope>INVOLVEMENT IN CMT4B2</scope>
</reference>
<reference key="7">
    <citation type="journal article" date="2004" name="Neurology">
        <title>A new SBF2 mutation in a family with recessive demyelinating Charcot-Marie-Tooth (CMT4B2).</title>
        <authorList>
            <person name="Conforti F.L."/>
            <person name="Muglia M."/>
            <person name="Mazzei R."/>
            <person name="Patitucci A."/>
            <person name="Valentino P."/>
            <person name="Magariello A."/>
            <person name="Sprovieri T."/>
            <person name="Bono F."/>
            <person name="Bergmann C."/>
            <person name="Gabriele A.L."/>
            <person name="Peluso G."/>
            <person name="Nistico R."/>
            <person name="Senderek J."/>
            <person name="Quattrone A."/>
        </authorList>
    </citation>
    <scope>INVOLVEMENT IN CMT4B2</scope>
</reference>
<reference key="8">
    <citation type="journal article" date="2005" name="J. Biol. Chem.">
        <title>The phosphoinositide-3-phosphatase MTMR2 associates with MTMR13, a membrane-associated pseudophosphatase also mutated in type 4B Charcot-Marie-Tooth disease.</title>
        <authorList>
            <person name="Robinson F.L."/>
            <person name="Dixon J.E."/>
        </authorList>
    </citation>
    <scope>INTERACTION WITH MTMR2</scope>
    <scope>SUBCELLULAR LOCATION</scope>
    <scope>DOMAIN</scope>
</reference>
<reference key="9">
    <citation type="journal article" date="2008" name="Proc. Natl. Acad. Sci. U.S.A.">
        <title>A quantitative atlas of mitotic phosphorylation.</title>
        <authorList>
            <person name="Dephoure N."/>
            <person name="Zhou C."/>
            <person name="Villen J."/>
            <person name="Beausoleil S.A."/>
            <person name="Bakalarski C.E."/>
            <person name="Elledge S.J."/>
            <person name="Gygi S.P."/>
        </authorList>
    </citation>
    <scope>IDENTIFICATION BY MASS SPECTROMETRY [LARGE SCALE ANALYSIS]</scope>
    <source>
        <tissue>Cervix carcinoma</tissue>
    </source>
</reference>
<reference key="10">
    <citation type="journal article" date="2010" name="J. Cell Biol.">
        <title>Family-wide characterization of the DENN domain Rab GDP-GTP exchange factors.</title>
        <authorList>
            <person name="Yoshimura S."/>
            <person name="Gerondopoulos A."/>
            <person name="Linford A."/>
            <person name="Rigden D.J."/>
            <person name="Barr F.A."/>
        </authorList>
    </citation>
    <scope>FUNCTION AS GUANYL-NUCLEOTIDE EXCHANGE FACTOR</scope>
</reference>
<reference key="11">
    <citation type="journal article" date="2010" name="Sci. Signal.">
        <title>Quantitative phosphoproteomics reveals widespread full phosphorylation site occupancy during mitosis.</title>
        <authorList>
            <person name="Olsen J.V."/>
            <person name="Vermeulen M."/>
            <person name="Santamaria A."/>
            <person name="Kumar C."/>
            <person name="Miller M.L."/>
            <person name="Jensen L.J."/>
            <person name="Gnad F."/>
            <person name="Cox J."/>
            <person name="Jensen T.S."/>
            <person name="Nigg E.A."/>
            <person name="Brunak S."/>
            <person name="Mann M."/>
        </authorList>
    </citation>
    <scope>PHOSPHORYLATION [LARGE SCALE ANALYSIS] AT SER-1127</scope>
    <scope>IDENTIFICATION BY MASS SPECTROMETRY [LARGE SCALE ANALYSIS]</scope>
    <source>
        <tissue>Cervix carcinoma</tissue>
    </source>
</reference>
<reference key="12">
    <citation type="journal article" date="2013" name="J. Proteome Res.">
        <title>Toward a comprehensive characterization of a human cancer cell phosphoproteome.</title>
        <authorList>
            <person name="Zhou H."/>
            <person name="Di Palma S."/>
            <person name="Preisinger C."/>
            <person name="Peng M."/>
            <person name="Polat A.N."/>
            <person name="Heck A.J."/>
            <person name="Mohammed S."/>
        </authorList>
    </citation>
    <scope>PHOSPHORYLATION [LARGE SCALE ANALYSIS] AT SER-1279</scope>
    <scope>IDENTIFICATION BY MASS SPECTROMETRY [LARGE SCALE ANALYSIS]</scope>
    <source>
        <tissue>Cervix carcinoma</tissue>
    </source>
</reference>
<reference key="13">
    <citation type="journal article" date="2015" name="EMBO Rep.">
        <title>Starvation-induced MTMR13 and RAB21 activity regulates VAMP8 to promote autophagosome-lysosome fusion.</title>
        <authorList>
            <person name="Jean S."/>
            <person name="Cox S."/>
            <person name="Nassari S."/>
            <person name="Kiger A.A."/>
        </authorList>
    </citation>
    <scope>FUNCTION</scope>
    <scope>INTERACTION WITH RAB21 AND VAMP8</scope>
</reference>
<reference key="14">
    <citation type="journal article" date="2022" name="Hum. Mol. Genet.">
        <title>Distinct roles for the Charcot-Marie-Tooth disease-causing endosomal regulators Mtmr5 and Mtmr13 in axon radial sorting and Schwann cell myelination.</title>
        <authorList>
            <person name="Mammel A.E."/>
            <person name="Delgado K.C."/>
            <person name="Chin A.L."/>
            <person name="Condon A.F."/>
            <person name="Hill J.Q."/>
            <person name="Aicher S.A."/>
            <person name="Wang Y."/>
            <person name="Fedorov L.M."/>
            <person name="Robinson F.L."/>
        </authorList>
    </citation>
    <scope>INTERACTION WITH MTMR2 AND MTMR5</scope>
</reference>
<name>MTMRD_HUMAN</name>